<gene>
    <name evidence="1" type="primary">ureD</name>
    <name type="ordered locus">M446_2214</name>
</gene>
<comment type="function">
    <text evidence="1">Required for maturation of urease via the functional incorporation of the urease nickel metallocenter.</text>
</comment>
<comment type="subunit">
    <text evidence="1">UreD, UreF and UreG form a complex that acts as a GTP-hydrolysis-dependent molecular chaperone, activating the urease apoprotein by helping to assemble the nickel containing metallocenter of UreC. The UreE protein probably delivers the nickel.</text>
</comment>
<comment type="subcellular location">
    <subcellularLocation>
        <location evidence="1">Cytoplasm</location>
    </subcellularLocation>
</comment>
<comment type="similarity">
    <text evidence="1">Belongs to the UreD family.</text>
</comment>
<sequence length="282" mass="29577">MSSHPTPSWPRRQRSEGRVALGAGLVAGGTTRLTDLAETGPLRLRLPRVEGAALEGVLLNSAGGLACGDRFAVAAEIGEGADMVLTTTAAEKIYRSDGPVTEIAAELRLGPRARLAWLPQETILYDGARLSRRLTAEIAPDAALTLFEALVFGRSARGETVREGEIRDAWRLARGGRLVYADTLRLDGAVAAHLARPAIAGGARAVATLVHAAPDAESRLDGLRGLIAAAGCAALGVEAGASAWNGLLVLRLLAPESAPLRRAATRILEGFRGLPLPRVWQT</sequence>
<protein>
    <recommendedName>
        <fullName evidence="1">Urease accessory protein UreD</fullName>
    </recommendedName>
</protein>
<proteinExistence type="inferred from homology"/>
<evidence type="ECO:0000255" key="1">
    <source>
        <dbReference type="HAMAP-Rule" id="MF_01384"/>
    </source>
</evidence>
<organism>
    <name type="scientific">Methylobacterium sp. (strain 4-46)</name>
    <dbReference type="NCBI Taxonomy" id="426117"/>
    <lineage>
        <taxon>Bacteria</taxon>
        <taxon>Pseudomonadati</taxon>
        <taxon>Pseudomonadota</taxon>
        <taxon>Alphaproteobacteria</taxon>
        <taxon>Hyphomicrobiales</taxon>
        <taxon>Methylobacteriaceae</taxon>
        <taxon>Methylobacterium</taxon>
    </lineage>
</organism>
<accession>B0UDF4</accession>
<reference key="1">
    <citation type="submission" date="2008-02" db="EMBL/GenBank/DDBJ databases">
        <title>Complete sequence of chromosome of Methylobacterium sp. 4-46.</title>
        <authorList>
            <consortium name="US DOE Joint Genome Institute"/>
            <person name="Copeland A."/>
            <person name="Lucas S."/>
            <person name="Lapidus A."/>
            <person name="Glavina del Rio T."/>
            <person name="Dalin E."/>
            <person name="Tice H."/>
            <person name="Bruce D."/>
            <person name="Goodwin L."/>
            <person name="Pitluck S."/>
            <person name="Chertkov O."/>
            <person name="Brettin T."/>
            <person name="Detter J.C."/>
            <person name="Han C."/>
            <person name="Kuske C.R."/>
            <person name="Schmutz J."/>
            <person name="Larimer F."/>
            <person name="Land M."/>
            <person name="Hauser L."/>
            <person name="Kyrpides N."/>
            <person name="Ivanova N."/>
            <person name="Marx C.J."/>
            <person name="Richardson P."/>
        </authorList>
    </citation>
    <scope>NUCLEOTIDE SEQUENCE [LARGE SCALE GENOMIC DNA]</scope>
    <source>
        <strain>4-46</strain>
    </source>
</reference>
<dbReference type="EMBL" id="CP000943">
    <property type="protein sequence ID" value="ACA16675.1"/>
    <property type="molecule type" value="Genomic_DNA"/>
</dbReference>
<dbReference type="RefSeq" id="WP_012332084.1">
    <property type="nucleotide sequence ID" value="NC_010511.1"/>
</dbReference>
<dbReference type="SMR" id="B0UDF4"/>
<dbReference type="STRING" id="426117.M446_2214"/>
<dbReference type="KEGG" id="met:M446_2214"/>
<dbReference type="eggNOG" id="COG0829">
    <property type="taxonomic scope" value="Bacteria"/>
</dbReference>
<dbReference type="HOGENOM" id="CLU_056339_2_0_5"/>
<dbReference type="GO" id="GO:0005737">
    <property type="term" value="C:cytoplasm"/>
    <property type="evidence" value="ECO:0007669"/>
    <property type="project" value="UniProtKB-SubCell"/>
</dbReference>
<dbReference type="GO" id="GO:0016151">
    <property type="term" value="F:nickel cation binding"/>
    <property type="evidence" value="ECO:0007669"/>
    <property type="project" value="UniProtKB-UniRule"/>
</dbReference>
<dbReference type="HAMAP" id="MF_01384">
    <property type="entry name" value="UreD"/>
    <property type="match status" value="1"/>
</dbReference>
<dbReference type="InterPro" id="IPR002669">
    <property type="entry name" value="UreD"/>
</dbReference>
<dbReference type="PANTHER" id="PTHR33643">
    <property type="entry name" value="UREASE ACCESSORY PROTEIN D"/>
    <property type="match status" value="1"/>
</dbReference>
<dbReference type="PANTHER" id="PTHR33643:SF1">
    <property type="entry name" value="UREASE ACCESSORY PROTEIN D"/>
    <property type="match status" value="1"/>
</dbReference>
<dbReference type="Pfam" id="PF01774">
    <property type="entry name" value="UreD"/>
    <property type="match status" value="1"/>
</dbReference>
<name>URED_METS4</name>
<keyword id="KW-0143">Chaperone</keyword>
<keyword id="KW-0963">Cytoplasm</keyword>
<keyword id="KW-0996">Nickel insertion</keyword>
<feature type="chain" id="PRO_0000346580" description="Urease accessory protein UreD">
    <location>
        <begin position="1"/>
        <end position="282"/>
    </location>
</feature>